<accession>P47764</accession>
<sequence length="97" mass="10667">DIAGSRGQPIFATANGRVVYAGNALGGYGNLIIIKHNDDYLSAYVHNDTMLVREQEEVKAGQKIATMGSTGTSSVRLHFEIRYKGKSVNPLRYLPQR</sequence>
<proteinExistence type="inferred from homology"/>
<keyword id="KW-0997">Cell inner membrane</keyword>
<keyword id="KW-1003">Cell membrane</keyword>
<keyword id="KW-0449">Lipoprotein</keyword>
<keyword id="KW-0472">Membrane</keyword>
<reference key="1">
    <citation type="journal article" date="1995" name="Infect. Immun.">
        <title>The rpoS gene from Yersinia enterocolitica and its influence on expression of virulence factors.</title>
        <authorList>
            <person name="Iriarte M."/>
            <person name="Stainier I."/>
            <person name="Cornelis G.R."/>
        </authorList>
    </citation>
    <scope>NUCLEOTIDE SEQUENCE [GENOMIC DNA]</scope>
    <source>
        <strain>W1024 / Serotype O:9</strain>
    </source>
</reference>
<dbReference type="EMBL" id="U16152">
    <property type="protein sequence ID" value="AAC43390.1"/>
    <property type="molecule type" value="Genomic_DNA"/>
</dbReference>
<dbReference type="SMR" id="P47764"/>
<dbReference type="STRING" id="1443113.LC20_04387"/>
<dbReference type="eggNOG" id="COG1388">
    <property type="taxonomic scope" value="Bacteria"/>
</dbReference>
<dbReference type="eggNOG" id="COG4942">
    <property type="taxonomic scope" value="Bacteria"/>
</dbReference>
<dbReference type="GO" id="GO:0032153">
    <property type="term" value="C:cell division site"/>
    <property type="evidence" value="ECO:0007669"/>
    <property type="project" value="TreeGrafter"/>
</dbReference>
<dbReference type="GO" id="GO:0009279">
    <property type="term" value="C:cell outer membrane"/>
    <property type="evidence" value="ECO:0007669"/>
    <property type="project" value="TreeGrafter"/>
</dbReference>
<dbReference type="GO" id="GO:0005886">
    <property type="term" value="C:plasma membrane"/>
    <property type="evidence" value="ECO:0007669"/>
    <property type="project" value="UniProtKB-SubCell"/>
</dbReference>
<dbReference type="GO" id="GO:0004222">
    <property type="term" value="F:metalloendopeptidase activity"/>
    <property type="evidence" value="ECO:0007669"/>
    <property type="project" value="TreeGrafter"/>
</dbReference>
<dbReference type="CDD" id="cd12797">
    <property type="entry name" value="M23_peptidase"/>
    <property type="match status" value="1"/>
</dbReference>
<dbReference type="Gene3D" id="2.70.70.10">
    <property type="entry name" value="Glucose Permease (Domain IIA)"/>
    <property type="match status" value="1"/>
</dbReference>
<dbReference type="InterPro" id="IPR050570">
    <property type="entry name" value="Cell_wall_metabolism_enzyme"/>
</dbReference>
<dbReference type="InterPro" id="IPR011055">
    <property type="entry name" value="Dup_hybrid_motif"/>
</dbReference>
<dbReference type="InterPro" id="IPR016047">
    <property type="entry name" value="Peptidase_M23"/>
</dbReference>
<dbReference type="PANTHER" id="PTHR21666:SF263">
    <property type="entry name" value="MUREIN HYDROLASE ACTIVATOR NLPD"/>
    <property type="match status" value="1"/>
</dbReference>
<dbReference type="PANTHER" id="PTHR21666">
    <property type="entry name" value="PEPTIDASE-RELATED"/>
    <property type="match status" value="1"/>
</dbReference>
<dbReference type="Pfam" id="PF01551">
    <property type="entry name" value="Peptidase_M23"/>
    <property type="match status" value="1"/>
</dbReference>
<dbReference type="SUPFAM" id="SSF51261">
    <property type="entry name" value="Duplicated hybrid motif"/>
    <property type="match status" value="1"/>
</dbReference>
<comment type="subcellular location">
    <subcellularLocation>
        <location evidence="2">Cell inner membrane</location>
        <topology evidence="1">Lipid-anchor</topology>
    </subcellularLocation>
</comment>
<comment type="similarity">
    <text evidence="2">Belongs to the E.coli NlpD/Haemophilus LppB family.</text>
</comment>
<feature type="chain" id="PRO_0000096160" description="Lipoprotein NlpD">
    <location>
        <begin position="1" status="less than"/>
        <end position="97"/>
    </location>
</feature>
<feature type="non-terminal residue">
    <location>
        <position position="1"/>
    </location>
</feature>
<protein>
    <recommendedName>
        <fullName>Lipoprotein NlpD</fullName>
    </recommendedName>
</protein>
<evidence type="ECO:0000255" key="1">
    <source>
        <dbReference type="PROSITE-ProRule" id="PRU00303"/>
    </source>
</evidence>
<evidence type="ECO:0000305" key="2"/>
<gene>
    <name type="primary">nlpD</name>
</gene>
<organism>
    <name type="scientific">Yersinia enterocolitica</name>
    <dbReference type="NCBI Taxonomy" id="630"/>
    <lineage>
        <taxon>Bacteria</taxon>
        <taxon>Pseudomonadati</taxon>
        <taxon>Pseudomonadota</taxon>
        <taxon>Gammaproteobacteria</taxon>
        <taxon>Enterobacterales</taxon>
        <taxon>Yersiniaceae</taxon>
        <taxon>Yersinia</taxon>
    </lineage>
</organism>
<name>NLPD_YEREN</name>